<dbReference type="EMBL" id="AL513382">
    <property type="protein sequence ID" value="CAD09239.1"/>
    <property type="molecule type" value="Genomic_DNA"/>
</dbReference>
<dbReference type="EMBL" id="AE014613">
    <property type="protein sequence ID" value="AAO71625.1"/>
    <property type="molecule type" value="Genomic_DNA"/>
</dbReference>
<dbReference type="RefSeq" id="NP_458553.1">
    <property type="nucleotide sequence ID" value="NC_003198.1"/>
</dbReference>
<dbReference type="SMR" id="P0A2F7"/>
<dbReference type="STRING" id="220341.gene:17588283"/>
<dbReference type="KEGG" id="stt:t4161"/>
<dbReference type="KEGG" id="sty:STY4451"/>
<dbReference type="PATRIC" id="fig|220341.7.peg.4552"/>
<dbReference type="eggNOG" id="COG0629">
    <property type="taxonomic scope" value="Bacteria"/>
</dbReference>
<dbReference type="HOGENOM" id="CLU_078758_0_2_6"/>
<dbReference type="OMA" id="FLRCNVW"/>
<dbReference type="OrthoDB" id="9809878at2"/>
<dbReference type="Proteomes" id="UP000000541">
    <property type="component" value="Chromosome"/>
</dbReference>
<dbReference type="Proteomes" id="UP000002670">
    <property type="component" value="Chromosome"/>
</dbReference>
<dbReference type="GO" id="GO:0009295">
    <property type="term" value="C:nucleoid"/>
    <property type="evidence" value="ECO:0007669"/>
    <property type="project" value="TreeGrafter"/>
</dbReference>
<dbReference type="GO" id="GO:0003697">
    <property type="term" value="F:single-stranded DNA binding"/>
    <property type="evidence" value="ECO:0007669"/>
    <property type="project" value="UniProtKB-UniRule"/>
</dbReference>
<dbReference type="GO" id="GO:0006310">
    <property type="term" value="P:DNA recombination"/>
    <property type="evidence" value="ECO:0007669"/>
    <property type="project" value="UniProtKB-UniRule"/>
</dbReference>
<dbReference type="GO" id="GO:0006281">
    <property type="term" value="P:DNA repair"/>
    <property type="evidence" value="ECO:0007669"/>
    <property type="project" value="UniProtKB-UniRule"/>
</dbReference>
<dbReference type="GO" id="GO:0006260">
    <property type="term" value="P:DNA replication"/>
    <property type="evidence" value="ECO:0007669"/>
    <property type="project" value="UniProtKB-UniRule"/>
</dbReference>
<dbReference type="CDD" id="cd04496">
    <property type="entry name" value="SSB_OBF"/>
    <property type="match status" value="1"/>
</dbReference>
<dbReference type="FunFam" id="2.40.50.140:FF:000065">
    <property type="entry name" value="Single-stranded DNA-binding protein"/>
    <property type="match status" value="1"/>
</dbReference>
<dbReference type="Gene3D" id="2.40.50.140">
    <property type="entry name" value="Nucleic acid-binding proteins"/>
    <property type="match status" value="1"/>
</dbReference>
<dbReference type="HAMAP" id="MF_00984">
    <property type="entry name" value="SSB"/>
    <property type="match status" value="1"/>
</dbReference>
<dbReference type="InterPro" id="IPR012340">
    <property type="entry name" value="NA-bd_OB-fold"/>
</dbReference>
<dbReference type="InterPro" id="IPR000424">
    <property type="entry name" value="Primosome_PriB/ssb"/>
</dbReference>
<dbReference type="InterPro" id="IPR011344">
    <property type="entry name" value="ssDNA-bd"/>
</dbReference>
<dbReference type="NCBIfam" id="NF006533">
    <property type="entry name" value="PRK09010.1"/>
    <property type="match status" value="1"/>
</dbReference>
<dbReference type="NCBIfam" id="TIGR00621">
    <property type="entry name" value="ssb"/>
    <property type="match status" value="1"/>
</dbReference>
<dbReference type="PANTHER" id="PTHR10302">
    <property type="entry name" value="SINGLE-STRANDED DNA-BINDING PROTEIN"/>
    <property type="match status" value="1"/>
</dbReference>
<dbReference type="PANTHER" id="PTHR10302:SF27">
    <property type="entry name" value="SINGLE-STRANDED DNA-BINDING PROTEIN"/>
    <property type="match status" value="1"/>
</dbReference>
<dbReference type="Pfam" id="PF00436">
    <property type="entry name" value="SSB"/>
    <property type="match status" value="1"/>
</dbReference>
<dbReference type="PIRSF" id="PIRSF002070">
    <property type="entry name" value="SSB"/>
    <property type="match status" value="1"/>
</dbReference>
<dbReference type="SUPFAM" id="SSF50249">
    <property type="entry name" value="Nucleic acid-binding proteins"/>
    <property type="match status" value="1"/>
</dbReference>
<dbReference type="PROSITE" id="PS50935">
    <property type="entry name" value="SSB"/>
    <property type="match status" value="1"/>
</dbReference>
<keyword id="KW-0227">DNA damage</keyword>
<keyword id="KW-0233">DNA recombination</keyword>
<keyword id="KW-0234">DNA repair</keyword>
<keyword id="KW-0235">DNA replication</keyword>
<keyword id="KW-0238">DNA-binding</keyword>
<name>SSB1_SALTI</name>
<gene>
    <name type="primary">ssb</name>
    <name type="ordered locus">STY4451</name>
    <name type="ordered locus">t4161</name>
</gene>
<feature type="initiator methionine" description="Removed" evidence="1">
    <location>
        <position position="1"/>
    </location>
</feature>
<feature type="chain" id="PRO_0000096090" description="Single-stranded DNA-binding protein 1">
    <location>
        <begin position="2"/>
        <end position="176"/>
    </location>
</feature>
<feature type="domain" description="SSB" evidence="2">
    <location>
        <begin position="6"/>
        <end position="111"/>
    </location>
</feature>
<feature type="region of interest" description="Disordered" evidence="3">
    <location>
        <begin position="111"/>
        <end position="176"/>
    </location>
</feature>
<feature type="short sequence motif" description="Important for interaction with partner proteins" evidence="2">
    <location>
        <begin position="171"/>
        <end position="176"/>
    </location>
</feature>
<feature type="compositionally biased region" description="Gly residues" evidence="3">
    <location>
        <begin position="116"/>
        <end position="133"/>
    </location>
</feature>
<feature type="compositionally biased region" description="Low complexity" evidence="3">
    <location>
        <begin position="134"/>
        <end position="150"/>
    </location>
</feature>
<feature type="compositionally biased region" description="Polar residues" evidence="3">
    <location>
        <begin position="151"/>
        <end position="161"/>
    </location>
</feature>
<proteinExistence type="inferred from homology"/>
<organism>
    <name type="scientific">Salmonella typhi</name>
    <dbReference type="NCBI Taxonomy" id="90370"/>
    <lineage>
        <taxon>Bacteria</taxon>
        <taxon>Pseudomonadati</taxon>
        <taxon>Pseudomonadota</taxon>
        <taxon>Gammaproteobacteria</taxon>
        <taxon>Enterobacterales</taxon>
        <taxon>Enterobacteriaceae</taxon>
        <taxon>Salmonella</taxon>
    </lineage>
</organism>
<protein>
    <recommendedName>
        <fullName evidence="2">Single-stranded DNA-binding protein 1</fullName>
        <shortName evidence="2">SSB 1</shortName>
    </recommendedName>
</protein>
<comment type="function">
    <text evidence="2">Plays an important role in DNA replication, recombination and repair. Binds to ssDNA and to an array of partner proteins to recruit them to their sites of action during DNA metabolism.</text>
</comment>
<comment type="subunit">
    <text evidence="2">Homotetramer.</text>
</comment>
<reference key="1">
    <citation type="journal article" date="2001" name="Nature">
        <title>Complete genome sequence of a multiple drug resistant Salmonella enterica serovar Typhi CT18.</title>
        <authorList>
            <person name="Parkhill J."/>
            <person name="Dougan G."/>
            <person name="James K.D."/>
            <person name="Thomson N.R."/>
            <person name="Pickard D."/>
            <person name="Wain J."/>
            <person name="Churcher C.M."/>
            <person name="Mungall K.L."/>
            <person name="Bentley S.D."/>
            <person name="Holden M.T.G."/>
            <person name="Sebaihia M."/>
            <person name="Baker S."/>
            <person name="Basham D."/>
            <person name="Brooks K."/>
            <person name="Chillingworth T."/>
            <person name="Connerton P."/>
            <person name="Cronin A."/>
            <person name="Davis P."/>
            <person name="Davies R.M."/>
            <person name="Dowd L."/>
            <person name="White N."/>
            <person name="Farrar J."/>
            <person name="Feltwell T."/>
            <person name="Hamlin N."/>
            <person name="Haque A."/>
            <person name="Hien T.T."/>
            <person name="Holroyd S."/>
            <person name="Jagels K."/>
            <person name="Krogh A."/>
            <person name="Larsen T.S."/>
            <person name="Leather S."/>
            <person name="Moule S."/>
            <person name="O'Gaora P."/>
            <person name="Parry C."/>
            <person name="Quail M.A."/>
            <person name="Rutherford K.M."/>
            <person name="Simmonds M."/>
            <person name="Skelton J."/>
            <person name="Stevens K."/>
            <person name="Whitehead S."/>
            <person name="Barrell B.G."/>
        </authorList>
    </citation>
    <scope>NUCLEOTIDE SEQUENCE [LARGE SCALE GENOMIC DNA]</scope>
    <source>
        <strain>CT18</strain>
    </source>
</reference>
<reference key="2">
    <citation type="journal article" date="2003" name="J. Bacteriol.">
        <title>Comparative genomics of Salmonella enterica serovar Typhi strains Ty2 and CT18.</title>
        <authorList>
            <person name="Deng W."/>
            <person name="Liou S.-R."/>
            <person name="Plunkett G. III"/>
            <person name="Mayhew G.F."/>
            <person name="Rose D.J."/>
            <person name="Burland V."/>
            <person name="Kodoyianni V."/>
            <person name="Schwartz D.C."/>
            <person name="Blattner F.R."/>
        </authorList>
    </citation>
    <scope>NUCLEOTIDE SEQUENCE [LARGE SCALE GENOMIC DNA]</scope>
    <source>
        <strain>ATCC 700931 / Ty2</strain>
    </source>
</reference>
<sequence>MASRGVNKVILVGNLGQDPEVRYMPSGGAVANLTLATSESWRDKQTGEMKEQTEWHRVVMFGKLAEVAGEYLRKGSQVYIEGQLRTRKWTDQSGQERYTTEINVPQIGGVMQMLGGRQGGGAPAGGQQQGGWGQPQQPQQPQGGNQFSGGAQSRPQQSAPAPSNEPPMDFDDDIPF</sequence>
<accession>P0A2F7</accession>
<accession>P37435</accession>
<evidence type="ECO:0000250" key="1"/>
<evidence type="ECO:0000255" key="2">
    <source>
        <dbReference type="HAMAP-Rule" id="MF_00984"/>
    </source>
</evidence>
<evidence type="ECO:0000256" key="3">
    <source>
        <dbReference type="SAM" id="MobiDB-lite"/>
    </source>
</evidence>